<dbReference type="EMBL" id="AK047666">
    <property type="protein sequence ID" value="BAC33118.1"/>
    <property type="molecule type" value="mRNA"/>
</dbReference>
<dbReference type="EMBL" id="AK049806">
    <property type="status" value="NOT_ANNOTATED_CDS"/>
    <property type="molecule type" value="mRNA"/>
</dbReference>
<dbReference type="EMBL" id="BC138911">
    <property type="protein sequence ID" value="AAI38912.1"/>
    <property type="molecule type" value="mRNA"/>
</dbReference>
<dbReference type="CCDS" id="CCDS36430.1"/>
<dbReference type="RefSeq" id="NP_001019649.1">
    <property type="nucleotide sequence ID" value="NM_001024478.1"/>
</dbReference>
<dbReference type="RefSeq" id="XP_006515253.1">
    <property type="nucleotide sequence ID" value="XM_006515190.5"/>
</dbReference>
<dbReference type="SMR" id="Q8BL00"/>
<dbReference type="FunCoup" id="Q8BL00">
    <property type="interactions" value="796"/>
</dbReference>
<dbReference type="STRING" id="10090.ENSMUSP00000093449"/>
<dbReference type="GlyCosmos" id="Q8BL00">
    <property type="glycosylation" value="3 sites, No reported glycans"/>
</dbReference>
<dbReference type="GlyGen" id="Q8BL00">
    <property type="glycosylation" value="6 sites, 4 N-linked glycans (4 sites)"/>
</dbReference>
<dbReference type="iPTMnet" id="Q8BL00"/>
<dbReference type="PhosphoSitePlus" id="Q8BL00"/>
<dbReference type="PaxDb" id="10090-ENSMUSP00000093449"/>
<dbReference type="ProteomicsDB" id="281516"/>
<dbReference type="Antibodypedia" id="2413">
    <property type="antibodies" value="58 antibodies from 15 providers"/>
</dbReference>
<dbReference type="DNASU" id="68764"/>
<dbReference type="Ensembl" id="ENSMUST00000095774.3">
    <property type="protein sequence ID" value="ENSMUSP00000093449.3"/>
    <property type="gene ID" value="ENSMUSG00000035860.10"/>
</dbReference>
<dbReference type="GeneID" id="68764"/>
<dbReference type="KEGG" id="mmu:68764"/>
<dbReference type="UCSC" id="uc007nij.1">
    <property type="organism name" value="mouse"/>
</dbReference>
<dbReference type="AGR" id="MGI:1916014"/>
<dbReference type="CTD" id="222256"/>
<dbReference type="MGI" id="MGI:1916014">
    <property type="gene designation" value="Cdhr3"/>
</dbReference>
<dbReference type="VEuPathDB" id="HostDB:ENSMUSG00000035860"/>
<dbReference type="eggNOG" id="KOG3594">
    <property type="taxonomic scope" value="Eukaryota"/>
</dbReference>
<dbReference type="eggNOG" id="KOG4289">
    <property type="taxonomic scope" value="Eukaryota"/>
</dbReference>
<dbReference type="GeneTree" id="ENSGT00940000161245"/>
<dbReference type="HOGENOM" id="CLU_017741_0_0_1"/>
<dbReference type="InParanoid" id="Q8BL00"/>
<dbReference type="OMA" id="WYVPFVV"/>
<dbReference type="OrthoDB" id="9047765at2759"/>
<dbReference type="PhylomeDB" id="Q8BL00"/>
<dbReference type="TreeFam" id="TF336601"/>
<dbReference type="BioGRID-ORCS" id="68764">
    <property type="hits" value="1 hit in 76 CRISPR screens"/>
</dbReference>
<dbReference type="PRO" id="PR:Q8BL00"/>
<dbReference type="Proteomes" id="UP000000589">
    <property type="component" value="Chromosome 12"/>
</dbReference>
<dbReference type="RNAct" id="Q8BL00">
    <property type="molecule type" value="protein"/>
</dbReference>
<dbReference type="Bgee" id="ENSMUSG00000035860">
    <property type="expression patterns" value="Expressed in olfactory epithelium and 39 other cell types or tissues"/>
</dbReference>
<dbReference type="GO" id="GO:0005886">
    <property type="term" value="C:plasma membrane"/>
    <property type="evidence" value="ECO:0000250"/>
    <property type="project" value="UniProtKB"/>
</dbReference>
<dbReference type="GO" id="GO:0005509">
    <property type="term" value="F:calcium ion binding"/>
    <property type="evidence" value="ECO:0007669"/>
    <property type="project" value="InterPro"/>
</dbReference>
<dbReference type="GO" id="GO:0007156">
    <property type="term" value="P:homophilic cell adhesion via plasma membrane adhesion molecules"/>
    <property type="evidence" value="ECO:0007669"/>
    <property type="project" value="InterPro"/>
</dbReference>
<dbReference type="CDD" id="cd11304">
    <property type="entry name" value="Cadherin_repeat"/>
    <property type="match status" value="5"/>
</dbReference>
<dbReference type="FunFam" id="2.60.40.60:FF:000231">
    <property type="entry name" value="Cadherin related family member 3"/>
    <property type="match status" value="1"/>
</dbReference>
<dbReference type="FunFam" id="2.60.40.60:FF:000237">
    <property type="entry name" value="Cadherin related family member 3"/>
    <property type="match status" value="1"/>
</dbReference>
<dbReference type="FunFam" id="2.60.40.60:FF:000244">
    <property type="entry name" value="Cadherin related family member 3"/>
    <property type="match status" value="1"/>
</dbReference>
<dbReference type="FunFam" id="2.60.40.60:FF:000250">
    <property type="entry name" value="Cadherin related family member 3"/>
    <property type="match status" value="1"/>
</dbReference>
<dbReference type="FunFam" id="2.60.40.60:FF:000281">
    <property type="entry name" value="Cadherin related family member 3"/>
    <property type="match status" value="1"/>
</dbReference>
<dbReference type="Gene3D" id="2.60.40.60">
    <property type="entry name" value="Cadherins"/>
    <property type="match status" value="5"/>
</dbReference>
<dbReference type="InterPro" id="IPR050971">
    <property type="entry name" value="Cadherin-domain_protein"/>
</dbReference>
<dbReference type="InterPro" id="IPR002126">
    <property type="entry name" value="Cadherin-like_dom"/>
</dbReference>
<dbReference type="InterPro" id="IPR015919">
    <property type="entry name" value="Cadherin-like_sf"/>
</dbReference>
<dbReference type="PANTHER" id="PTHR24025:SF30">
    <property type="entry name" value="CADHERIN DOMAIN-CONTAINING PROTEIN"/>
    <property type="match status" value="1"/>
</dbReference>
<dbReference type="PANTHER" id="PTHR24025">
    <property type="entry name" value="DESMOGLEIN FAMILY MEMBER"/>
    <property type="match status" value="1"/>
</dbReference>
<dbReference type="Pfam" id="PF00028">
    <property type="entry name" value="Cadherin"/>
    <property type="match status" value="2"/>
</dbReference>
<dbReference type="PRINTS" id="PR00205">
    <property type="entry name" value="CADHERIN"/>
</dbReference>
<dbReference type="SMART" id="SM00112">
    <property type="entry name" value="CA"/>
    <property type="match status" value="6"/>
</dbReference>
<dbReference type="SUPFAM" id="SSF49313">
    <property type="entry name" value="Cadherin-like"/>
    <property type="match status" value="5"/>
</dbReference>
<dbReference type="PROSITE" id="PS50268">
    <property type="entry name" value="CADHERIN_2"/>
    <property type="match status" value="6"/>
</dbReference>
<organism>
    <name type="scientific">Mus musculus</name>
    <name type="common">Mouse</name>
    <dbReference type="NCBI Taxonomy" id="10090"/>
    <lineage>
        <taxon>Eukaryota</taxon>
        <taxon>Metazoa</taxon>
        <taxon>Chordata</taxon>
        <taxon>Craniata</taxon>
        <taxon>Vertebrata</taxon>
        <taxon>Euteleostomi</taxon>
        <taxon>Mammalia</taxon>
        <taxon>Eutheria</taxon>
        <taxon>Euarchontoglires</taxon>
        <taxon>Glires</taxon>
        <taxon>Rodentia</taxon>
        <taxon>Myomorpha</taxon>
        <taxon>Muroidea</taxon>
        <taxon>Muridae</taxon>
        <taxon>Murinae</taxon>
        <taxon>Mus</taxon>
        <taxon>Mus</taxon>
    </lineage>
</organism>
<gene>
    <name type="primary">Cdhr3</name>
    <name type="synonym">Cdh28</name>
</gene>
<name>CDHR3_MOUSE</name>
<accession>Q8BL00</accession>
<accession>B2RSL6</accession>
<comment type="function">
    <text>Cadherins are calcium-dependent cell adhesion proteins. They preferentially interact with themselves in a homophilic manner in connecting cells; cadherins may thus contribute to the sorting of heterogeneous cell types.</text>
</comment>
<comment type="subcellular location">
    <subcellularLocation>
        <location evidence="2">Cell membrane</location>
        <topology evidence="1">Single-pass type I membrane protein</topology>
    </subcellularLocation>
</comment>
<sequence>MQGAVIVLVLFGITSGGEALHLLHLPATSNVAENAPPATLVHKFSVNLSVSLSPVIPGFPLVVNPRPFTEAFRVNRLSATNFEVVTTGKEQLDFERGPKAFDLQIYVKDDVGVTDVQVLTVQVTDVNEPPQFQGILAQGLNLYVIERTNPGFIYQVEAFDPEDTSRSIPLGYFLISPSKNFRMSANGTLFSTTELDFEAGHKSFNLLVGVRDSGNLEASTALQVTIVNINDETPRFTSPRRVYSVPEEVPLGTMVANITAMDPDDEGFPGRLLYSITTTSSYFMVDQLTGTIQVARRLDRDAGELRQNPIISLEVRVRDRPSGGQENRMQITFIVEDINDNPATCRKLTFSIMLPERTANGTLLLDLNKFCFDDDSEAPNNKFNFTTPSGAGSSRRFSQHPAGSGRIVLTGDLDYENPSNLAVGNVYNVMIQVQDAAPPYYKKSIYISILTRPENEFPLIFERPSYVFDVPERRPARTQIGQVRATDADFPRTPVVYSVSRGGSSLQYPNIFWINPKTGELQLITQADHETTSVYILTVEATNGEDRSSVTVTVNILGENDEKPVCTPNFYFMAIPVDLKVGTNIQNFKLTCTDLDSSPSSFRYSIGSGNINNHFTFSPNAGSNITRLLLASRFDYSSLDTVWDYQLLVHITDDNLLSGSTKAKALVETGTVTLSVKVIPHPTTTITTPRPRITYQIRRENVYSTSAWYVPFIVTLGSILLLGLLGSLMVLLSKAVYRHCSSTTRRDRKPLTKKRDTKRMNREAMVESIQMNSVFDGEAVDPVTGEIYEFNSKTGARRWKGPLTQLPNWPEPSTQHRGTAGEAPVPKHTGR</sequence>
<keyword id="KW-0106">Calcium</keyword>
<keyword id="KW-0130">Cell adhesion</keyword>
<keyword id="KW-1003">Cell membrane</keyword>
<keyword id="KW-0325">Glycoprotein</keyword>
<keyword id="KW-0472">Membrane</keyword>
<keyword id="KW-1185">Reference proteome</keyword>
<keyword id="KW-0677">Repeat</keyword>
<keyword id="KW-0732">Signal</keyword>
<keyword id="KW-0812">Transmembrane</keyword>
<keyword id="KW-1133">Transmembrane helix</keyword>
<proteinExistence type="evidence at transcript level"/>
<evidence type="ECO:0000250" key="1"/>
<evidence type="ECO:0000250" key="2">
    <source>
        <dbReference type="UniProtKB" id="Q6ZTQ4"/>
    </source>
</evidence>
<evidence type="ECO:0000255" key="3"/>
<evidence type="ECO:0000255" key="4">
    <source>
        <dbReference type="PROSITE-ProRule" id="PRU00043"/>
    </source>
</evidence>
<evidence type="ECO:0000256" key="5">
    <source>
        <dbReference type="SAM" id="MobiDB-lite"/>
    </source>
</evidence>
<reference key="1">
    <citation type="journal article" date="2005" name="Science">
        <title>The transcriptional landscape of the mammalian genome.</title>
        <authorList>
            <person name="Carninci P."/>
            <person name="Kasukawa T."/>
            <person name="Katayama S."/>
            <person name="Gough J."/>
            <person name="Frith M.C."/>
            <person name="Maeda N."/>
            <person name="Oyama R."/>
            <person name="Ravasi T."/>
            <person name="Lenhard B."/>
            <person name="Wells C."/>
            <person name="Kodzius R."/>
            <person name="Shimokawa K."/>
            <person name="Bajic V.B."/>
            <person name="Brenner S.E."/>
            <person name="Batalov S."/>
            <person name="Forrest A.R."/>
            <person name="Zavolan M."/>
            <person name="Davis M.J."/>
            <person name="Wilming L.G."/>
            <person name="Aidinis V."/>
            <person name="Allen J.E."/>
            <person name="Ambesi-Impiombato A."/>
            <person name="Apweiler R."/>
            <person name="Aturaliya R.N."/>
            <person name="Bailey T.L."/>
            <person name="Bansal M."/>
            <person name="Baxter L."/>
            <person name="Beisel K.W."/>
            <person name="Bersano T."/>
            <person name="Bono H."/>
            <person name="Chalk A.M."/>
            <person name="Chiu K.P."/>
            <person name="Choudhary V."/>
            <person name="Christoffels A."/>
            <person name="Clutterbuck D.R."/>
            <person name="Crowe M.L."/>
            <person name="Dalla E."/>
            <person name="Dalrymple B.P."/>
            <person name="de Bono B."/>
            <person name="Della Gatta G."/>
            <person name="di Bernardo D."/>
            <person name="Down T."/>
            <person name="Engstrom P."/>
            <person name="Fagiolini M."/>
            <person name="Faulkner G."/>
            <person name="Fletcher C.F."/>
            <person name="Fukushima T."/>
            <person name="Furuno M."/>
            <person name="Futaki S."/>
            <person name="Gariboldi M."/>
            <person name="Georgii-Hemming P."/>
            <person name="Gingeras T.R."/>
            <person name="Gojobori T."/>
            <person name="Green R.E."/>
            <person name="Gustincich S."/>
            <person name="Harbers M."/>
            <person name="Hayashi Y."/>
            <person name="Hensch T.K."/>
            <person name="Hirokawa N."/>
            <person name="Hill D."/>
            <person name="Huminiecki L."/>
            <person name="Iacono M."/>
            <person name="Ikeo K."/>
            <person name="Iwama A."/>
            <person name="Ishikawa T."/>
            <person name="Jakt M."/>
            <person name="Kanapin A."/>
            <person name="Katoh M."/>
            <person name="Kawasawa Y."/>
            <person name="Kelso J."/>
            <person name="Kitamura H."/>
            <person name="Kitano H."/>
            <person name="Kollias G."/>
            <person name="Krishnan S.P."/>
            <person name="Kruger A."/>
            <person name="Kummerfeld S.K."/>
            <person name="Kurochkin I.V."/>
            <person name="Lareau L.F."/>
            <person name="Lazarevic D."/>
            <person name="Lipovich L."/>
            <person name="Liu J."/>
            <person name="Liuni S."/>
            <person name="McWilliam S."/>
            <person name="Madan Babu M."/>
            <person name="Madera M."/>
            <person name="Marchionni L."/>
            <person name="Matsuda H."/>
            <person name="Matsuzawa S."/>
            <person name="Miki H."/>
            <person name="Mignone F."/>
            <person name="Miyake S."/>
            <person name="Morris K."/>
            <person name="Mottagui-Tabar S."/>
            <person name="Mulder N."/>
            <person name="Nakano N."/>
            <person name="Nakauchi H."/>
            <person name="Ng P."/>
            <person name="Nilsson R."/>
            <person name="Nishiguchi S."/>
            <person name="Nishikawa S."/>
            <person name="Nori F."/>
            <person name="Ohara O."/>
            <person name="Okazaki Y."/>
            <person name="Orlando V."/>
            <person name="Pang K.C."/>
            <person name="Pavan W.J."/>
            <person name="Pavesi G."/>
            <person name="Pesole G."/>
            <person name="Petrovsky N."/>
            <person name="Piazza S."/>
            <person name="Reed J."/>
            <person name="Reid J.F."/>
            <person name="Ring B.Z."/>
            <person name="Ringwald M."/>
            <person name="Rost B."/>
            <person name="Ruan Y."/>
            <person name="Salzberg S.L."/>
            <person name="Sandelin A."/>
            <person name="Schneider C."/>
            <person name="Schoenbach C."/>
            <person name="Sekiguchi K."/>
            <person name="Semple C.A."/>
            <person name="Seno S."/>
            <person name="Sessa L."/>
            <person name="Sheng Y."/>
            <person name="Shibata Y."/>
            <person name="Shimada H."/>
            <person name="Shimada K."/>
            <person name="Silva D."/>
            <person name="Sinclair B."/>
            <person name="Sperling S."/>
            <person name="Stupka E."/>
            <person name="Sugiura K."/>
            <person name="Sultana R."/>
            <person name="Takenaka Y."/>
            <person name="Taki K."/>
            <person name="Tammoja K."/>
            <person name="Tan S.L."/>
            <person name="Tang S."/>
            <person name="Taylor M.S."/>
            <person name="Tegner J."/>
            <person name="Teichmann S.A."/>
            <person name="Ueda H.R."/>
            <person name="van Nimwegen E."/>
            <person name="Verardo R."/>
            <person name="Wei C.L."/>
            <person name="Yagi K."/>
            <person name="Yamanishi H."/>
            <person name="Zabarovsky E."/>
            <person name="Zhu S."/>
            <person name="Zimmer A."/>
            <person name="Hide W."/>
            <person name="Bult C."/>
            <person name="Grimmond S.M."/>
            <person name="Teasdale R.D."/>
            <person name="Liu E.T."/>
            <person name="Brusic V."/>
            <person name="Quackenbush J."/>
            <person name="Wahlestedt C."/>
            <person name="Mattick J.S."/>
            <person name="Hume D.A."/>
            <person name="Kai C."/>
            <person name="Sasaki D."/>
            <person name="Tomaru Y."/>
            <person name="Fukuda S."/>
            <person name="Kanamori-Katayama M."/>
            <person name="Suzuki M."/>
            <person name="Aoki J."/>
            <person name="Arakawa T."/>
            <person name="Iida J."/>
            <person name="Imamura K."/>
            <person name="Itoh M."/>
            <person name="Kato T."/>
            <person name="Kawaji H."/>
            <person name="Kawagashira N."/>
            <person name="Kawashima T."/>
            <person name="Kojima M."/>
            <person name="Kondo S."/>
            <person name="Konno H."/>
            <person name="Nakano K."/>
            <person name="Ninomiya N."/>
            <person name="Nishio T."/>
            <person name="Okada M."/>
            <person name="Plessy C."/>
            <person name="Shibata K."/>
            <person name="Shiraki T."/>
            <person name="Suzuki S."/>
            <person name="Tagami M."/>
            <person name="Waki K."/>
            <person name="Watahiki A."/>
            <person name="Okamura-Oho Y."/>
            <person name="Suzuki H."/>
            <person name="Kawai J."/>
            <person name="Hayashizaki Y."/>
        </authorList>
    </citation>
    <scope>NUCLEOTIDE SEQUENCE [LARGE SCALE MRNA]</scope>
    <source>
        <strain>C57BL/6J</strain>
        <tissue>Corpus striatum</tissue>
        <tissue>Hippocampus</tissue>
    </source>
</reference>
<reference key="2">
    <citation type="journal article" date="2004" name="Genome Res.">
        <title>The status, quality, and expansion of the NIH full-length cDNA project: the Mammalian Gene Collection (MGC).</title>
        <authorList>
            <consortium name="The MGC Project Team"/>
        </authorList>
    </citation>
    <scope>NUCLEOTIDE SEQUENCE [LARGE SCALE MRNA]</scope>
    <source>
        <tissue>Brain</tissue>
    </source>
</reference>
<feature type="signal peptide" evidence="3">
    <location>
        <begin position="1"/>
        <end position="19"/>
    </location>
</feature>
<feature type="chain" id="PRO_0000305904" description="Cadherin-related family member 3">
    <location>
        <begin position="20"/>
        <end position="831"/>
    </location>
</feature>
<feature type="topological domain" description="Extracellular" evidence="3">
    <location>
        <begin position="20"/>
        <end position="711"/>
    </location>
</feature>
<feature type="transmembrane region" description="Helical" evidence="3">
    <location>
        <begin position="712"/>
        <end position="732"/>
    </location>
</feature>
<feature type="topological domain" description="Cytoplasmic" evidence="3">
    <location>
        <begin position="733"/>
        <end position="831"/>
    </location>
</feature>
<feature type="domain" description="Cadherin 1" evidence="4">
    <location>
        <begin position="24"/>
        <end position="132"/>
    </location>
</feature>
<feature type="domain" description="Cadherin 2" evidence="4">
    <location>
        <begin position="136"/>
        <end position="236"/>
    </location>
</feature>
<feature type="domain" description="Cadherin 3" evidence="4">
    <location>
        <begin position="237"/>
        <end position="344"/>
    </location>
</feature>
<feature type="domain" description="Cadherin 4" evidence="4">
    <location>
        <begin position="346"/>
        <end position="466"/>
    </location>
</feature>
<feature type="domain" description="Cadherin 5" evidence="4">
    <location>
        <begin position="462"/>
        <end position="570"/>
    </location>
</feature>
<feature type="domain" description="Cadherin 6" evidence="4">
    <location>
        <begin position="567"/>
        <end position="693"/>
    </location>
</feature>
<feature type="region of interest" description="Disordered" evidence="5">
    <location>
        <begin position="743"/>
        <end position="763"/>
    </location>
</feature>
<feature type="region of interest" description="Disordered" evidence="5">
    <location>
        <begin position="798"/>
        <end position="831"/>
    </location>
</feature>
<feature type="compositionally biased region" description="Basic and acidic residues" evidence="5">
    <location>
        <begin position="749"/>
        <end position="763"/>
    </location>
</feature>
<feature type="compositionally biased region" description="Polar residues" evidence="5">
    <location>
        <begin position="805"/>
        <end position="817"/>
    </location>
</feature>
<feature type="glycosylation site" description="N-linked (GlcNAc...) asparagine" evidence="3">
    <location>
        <position position="47"/>
    </location>
</feature>
<feature type="glycosylation site" description="N-linked (GlcNAc...) asparagine" evidence="3">
    <location>
        <position position="186"/>
    </location>
</feature>
<feature type="glycosylation site" description="N-linked (GlcNAc...) asparagine" evidence="3">
    <location>
        <position position="257"/>
    </location>
</feature>
<protein>
    <recommendedName>
        <fullName>Cadherin-related family member 3</fullName>
    </recommendedName>
    <alternativeName>
        <fullName>Cadherin-like protein 28</fullName>
    </alternativeName>
</protein>